<dbReference type="EC" id="4.1.2.-" evidence="1"/>
<dbReference type="EMBL" id="CP000886">
    <property type="protein sequence ID" value="ABX70383.1"/>
    <property type="molecule type" value="Genomic_DNA"/>
</dbReference>
<dbReference type="RefSeq" id="WP_000424866.1">
    <property type="nucleotide sequence ID" value="NC_010102.1"/>
</dbReference>
<dbReference type="SMR" id="A9N0F4"/>
<dbReference type="KEGG" id="spq:SPAB_05092"/>
<dbReference type="PATRIC" id="fig|1016998.12.peg.4779"/>
<dbReference type="HOGENOM" id="CLU_079764_2_0_6"/>
<dbReference type="BioCyc" id="SENT1016998:SPAB_RS20720-MONOMER"/>
<dbReference type="Proteomes" id="UP000008556">
    <property type="component" value="Chromosome"/>
</dbReference>
<dbReference type="GO" id="GO:0005737">
    <property type="term" value="C:cytoplasm"/>
    <property type="evidence" value="ECO:0007669"/>
    <property type="project" value="UniProtKB-SubCell"/>
</dbReference>
<dbReference type="GO" id="GO:0097023">
    <property type="term" value="F:fructose 6-phosphate aldolase activity"/>
    <property type="evidence" value="ECO:0007669"/>
    <property type="project" value="RHEA"/>
</dbReference>
<dbReference type="GO" id="GO:0006000">
    <property type="term" value="P:fructose metabolic process"/>
    <property type="evidence" value="ECO:0007669"/>
    <property type="project" value="UniProtKB-UniRule"/>
</dbReference>
<dbReference type="CDD" id="cd00956">
    <property type="entry name" value="Transaldolase_FSA"/>
    <property type="match status" value="1"/>
</dbReference>
<dbReference type="FunFam" id="3.20.20.70:FF:000018">
    <property type="entry name" value="Probable transaldolase"/>
    <property type="match status" value="1"/>
</dbReference>
<dbReference type="Gene3D" id="3.20.20.70">
    <property type="entry name" value="Aldolase class I"/>
    <property type="match status" value="1"/>
</dbReference>
<dbReference type="HAMAP" id="MF_00496">
    <property type="entry name" value="F6P_aldolase"/>
    <property type="match status" value="1"/>
</dbReference>
<dbReference type="InterPro" id="IPR013785">
    <property type="entry name" value="Aldolase_TIM"/>
</dbReference>
<dbReference type="InterPro" id="IPR023001">
    <property type="entry name" value="F6P_aldolase"/>
</dbReference>
<dbReference type="InterPro" id="IPR001585">
    <property type="entry name" value="TAL/FSA"/>
</dbReference>
<dbReference type="InterPro" id="IPR004731">
    <property type="entry name" value="Transaldolase_3B/F6P_aldolase"/>
</dbReference>
<dbReference type="InterPro" id="IPR018225">
    <property type="entry name" value="Transaldolase_AS"/>
</dbReference>
<dbReference type="InterPro" id="IPR033919">
    <property type="entry name" value="TSA/FSA_arc/bac"/>
</dbReference>
<dbReference type="NCBIfam" id="TIGR00875">
    <property type="entry name" value="fsa_talC_mipB"/>
    <property type="match status" value="1"/>
</dbReference>
<dbReference type="NCBIfam" id="NF009296">
    <property type="entry name" value="PRK12653.1"/>
    <property type="match status" value="1"/>
</dbReference>
<dbReference type="PANTHER" id="PTHR10683:SF40">
    <property type="entry name" value="FRUCTOSE-6-PHOSPHATE ALDOLASE 1-RELATED"/>
    <property type="match status" value="1"/>
</dbReference>
<dbReference type="PANTHER" id="PTHR10683">
    <property type="entry name" value="TRANSALDOLASE"/>
    <property type="match status" value="1"/>
</dbReference>
<dbReference type="Pfam" id="PF00923">
    <property type="entry name" value="TAL_FSA"/>
    <property type="match status" value="1"/>
</dbReference>
<dbReference type="SUPFAM" id="SSF51569">
    <property type="entry name" value="Aldolase"/>
    <property type="match status" value="1"/>
</dbReference>
<dbReference type="PROSITE" id="PS01054">
    <property type="entry name" value="TRANSALDOLASE_1"/>
    <property type="match status" value="1"/>
</dbReference>
<dbReference type="PROSITE" id="PS00958">
    <property type="entry name" value="TRANSALDOLASE_2"/>
    <property type="match status" value="1"/>
</dbReference>
<gene>
    <name evidence="1" type="primary">fsa</name>
    <name type="ordered locus">SPAB_05092</name>
</gene>
<feature type="chain" id="PRO_1000081411" description="Fructose-6-phosphate aldolase">
    <location>
        <begin position="1"/>
        <end position="220"/>
    </location>
</feature>
<feature type="active site" description="Schiff-base intermediate with substrate" evidence="1">
    <location>
        <position position="85"/>
    </location>
</feature>
<keyword id="KW-0119">Carbohydrate metabolism</keyword>
<keyword id="KW-0963">Cytoplasm</keyword>
<keyword id="KW-0456">Lyase</keyword>
<keyword id="KW-0704">Schiff base</keyword>
<protein>
    <recommendedName>
        <fullName evidence="1">Fructose-6-phosphate aldolase</fullName>
        <ecNumber evidence="1">4.1.2.-</ecNumber>
    </recommendedName>
</protein>
<name>FSA_SALPB</name>
<organism>
    <name type="scientific">Salmonella paratyphi B (strain ATCC BAA-1250 / SPB7)</name>
    <dbReference type="NCBI Taxonomy" id="1016998"/>
    <lineage>
        <taxon>Bacteria</taxon>
        <taxon>Pseudomonadati</taxon>
        <taxon>Pseudomonadota</taxon>
        <taxon>Gammaproteobacteria</taxon>
        <taxon>Enterobacterales</taxon>
        <taxon>Enterobacteriaceae</taxon>
        <taxon>Salmonella</taxon>
    </lineage>
</organism>
<comment type="function">
    <text evidence="1">Catalyzes the reversible formation of fructose 6-phosphate from dihydroxyacetone and D-glyceraldehyde 3-phosphate via an aldolization reaction.</text>
</comment>
<comment type="catalytic activity">
    <reaction evidence="1">
        <text>beta-D-fructose 6-phosphate = dihydroxyacetone + D-glyceraldehyde 3-phosphate</text>
        <dbReference type="Rhea" id="RHEA:28002"/>
        <dbReference type="ChEBI" id="CHEBI:16016"/>
        <dbReference type="ChEBI" id="CHEBI:57634"/>
        <dbReference type="ChEBI" id="CHEBI:59776"/>
    </reaction>
</comment>
<comment type="subunit">
    <text evidence="1">Homodecamer.</text>
</comment>
<comment type="subcellular location">
    <subcellularLocation>
        <location evidence="1">Cytoplasm</location>
    </subcellularLocation>
</comment>
<comment type="similarity">
    <text evidence="1">Belongs to the transaldolase family. Type 3A subfamily.</text>
</comment>
<accession>A9N0F4</accession>
<reference key="1">
    <citation type="submission" date="2007-11" db="EMBL/GenBank/DDBJ databases">
        <authorList>
            <consortium name="The Salmonella enterica serovar Paratyphi B Genome Sequencing Project"/>
            <person name="McClelland M."/>
            <person name="Sanderson E.K."/>
            <person name="Porwollik S."/>
            <person name="Spieth J."/>
            <person name="Clifton W.S."/>
            <person name="Fulton R."/>
            <person name="Cordes M."/>
            <person name="Wollam A."/>
            <person name="Shah N."/>
            <person name="Pepin K."/>
            <person name="Bhonagiri V."/>
            <person name="Nash W."/>
            <person name="Johnson M."/>
            <person name="Thiruvilangam P."/>
            <person name="Wilson R."/>
        </authorList>
    </citation>
    <scope>NUCLEOTIDE SEQUENCE [LARGE SCALE GENOMIC DNA]</scope>
    <source>
        <strain>ATCC BAA-1250 / SPB7</strain>
    </source>
</reference>
<sequence length="220" mass="23525">MELYLDTANVAEVERLARIFPIAGVTTNPSIVAASKESIWDVLPRLQNAIGEEGTLFAQTMSRDAKGMVEEAKRLNNAIPGIVVKIPVTAEGLAAIKLLKKEGIVTLGTAVYSASQGLLAALAGAKYVAPYVNRVDAQGGDGIRMVQELQTLLEHHAPDSMVLAASFKTPRQALDCLLAGCQAITLPLDVAQQMLNTPAVESAIEKFEQDWKNAFGNLNL</sequence>
<proteinExistence type="inferred from homology"/>
<evidence type="ECO:0000255" key="1">
    <source>
        <dbReference type="HAMAP-Rule" id="MF_00496"/>
    </source>
</evidence>